<comment type="function">
    <text evidence="1">Participates actively in the response to hyperosmotic and heat shock by preventing the aggregation of stress-denatured proteins and by disaggregating proteins, also in an autonomous, DnaK-independent fashion. Unfolded proteins bind initially to DnaJ; upon interaction with the DnaJ-bound protein, DnaK hydrolyzes its bound ATP, resulting in the formation of a stable complex. GrpE releases ADP from DnaK; ATP binding to DnaK triggers the release of the substrate protein, thus completing the reaction cycle. Several rounds of ATP-dependent interactions between DnaJ, DnaK and GrpE are required for fully efficient folding. Also involved, together with DnaK and GrpE, in the DNA replication of plasmids through activation of initiation proteins.</text>
</comment>
<comment type="cofactor">
    <cofactor evidence="1">
        <name>Zn(2+)</name>
        <dbReference type="ChEBI" id="CHEBI:29105"/>
    </cofactor>
    <text evidence="1">Binds 2 Zn(2+) ions per monomer.</text>
</comment>
<comment type="subunit">
    <text evidence="1">Homodimer.</text>
</comment>
<comment type="subcellular location">
    <subcellularLocation>
        <location evidence="1">Cytoplasm</location>
    </subcellularLocation>
</comment>
<comment type="domain">
    <text evidence="1">The J domain is necessary and sufficient to stimulate DnaK ATPase activity. Zinc center 1 plays an important role in the autonomous, DnaK-independent chaperone activity of DnaJ. Zinc center 2 is essential for interaction with DnaK and for DnaJ activity.</text>
</comment>
<comment type="similarity">
    <text evidence="1">Belongs to the DnaJ family.</text>
</comment>
<accession>Q8L3D3</accession>
<proteinExistence type="inferred from homology"/>
<reference key="1">
    <citation type="journal article" date="2004" name="Extremophiles">
        <title>Gene structure and transcriptional regulation of dnaK and dnaJ genes from a psychrophilic bacterium, Colwellia maris.</title>
        <authorList>
            <person name="Yamauchi S."/>
            <person name="Okuyama H."/>
            <person name="Nishiyama Y."/>
            <person name="Hayashi H."/>
        </authorList>
    </citation>
    <scope>NUCLEOTIDE SEQUENCE [GENOMIC DNA]</scope>
</reference>
<feature type="chain" id="PRO_0000070765" description="Chaperone protein DnaJ">
    <location>
        <begin position="1"/>
        <end position="379"/>
    </location>
</feature>
<feature type="domain" description="J" evidence="1">
    <location>
        <begin position="5"/>
        <end position="70"/>
    </location>
</feature>
<feature type="repeat" description="CXXCXGXG motif">
    <location>
        <begin position="148"/>
        <end position="155"/>
    </location>
</feature>
<feature type="repeat" description="CXXCXGXG motif">
    <location>
        <begin position="165"/>
        <end position="172"/>
    </location>
</feature>
<feature type="repeat" description="CXXCXGXG motif">
    <location>
        <begin position="187"/>
        <end position="194"/>
    </location>
</feature>
<feature type="repeat" description="CXXCXGXG motif">
    <location>
        <begin position="201"/>
        <end position="208"/>
    </location>
</feature>
<feature type="zinc finger region" description="CR-type" evidence="1">
    <location>
        <begin position="135"/>
        <end position="213"/>
    </location>
</feature>
<feature type="binding site" evidence="1">
    <location>
        <position position="148"/>
    </location>
    <ligand>
        <name>Zn(2+)</name>
        <dbReference type="ChEBI" id="CHEBI:29105"/>
        <label>1</label>
    </ligand>
</feature>
<feature type="binding site" evidence="1">
    <location>
        <position position="151"/>
    </location>
    <ligand>
        <name>Zn(2+)</name>
        <dbReference type="ChEBI" id="CHEBI:29105"/>
        <label>1</label>
    </ligand>
</feature>
<feature type="binding site" evidence="1">
    <location>
        <position position="165"/>
    </location>
    <ligand>
        <name>Zn(2+)</name>
        <dbReference type="ChEBI" id="CHEBI:29105"/>
        <label>2</label>
    </ligand>
</feature>
<feature type="binding site" evidence="1">
    <location>
        <position position="168"/>
    </location>
    <ligand>
        <name>Zn(2+)</name>
        <dbReference type="ChEBI" id="CHEBI:29105"/>
        <label>2</label>
    </ligand>
</feature>
<feature type="binding site" evidence="1">
    <location>
        <position position="187"/>
    </location>
    <ligand>
        <name>Zn(2+)</name>
        <dbReference type="ChEBI" id="CHEBI:29105"/>
        <label>2</label>
    </ligand>
</feature>
<feature type="binding site" evidence="1">
    <location>
        <position position="190"/>
    </location>
    <ligand>
        <name>Zn(2+)</name>
        <dbReference type="ChEBI" id="CHEBI:29105"/>
        <label>2</label>
    </ligand>
</feature>
<feature type="binding site" evidence="1">
    <location>
        <position position="201"/>
    </location>
    <ligand>
        <name>Zn(2+)</name>
        <dbReference type="ChEBI" id="CHEBI:29105"/>
        <label>1</label>
    </ligand>
</feature>
<feature type="binding site" evidence="1">
    <location>
        <position position="204"/>
    </location>
    <ligand>
        <name>Zn(2+)</name>
        <dbReference type="ChEBI" id="CHEBI:29105"/>
        <label>1</label>
    </ligand>
</feature>
<sequence>MSKRDYYETLEVSQDASEKEIKKAYKKLAMKYHPDRTQGDKSKEETFKEVKEAYEILNDDQKRAAYDQYGHAAFEQGGHGGGGGGHGGGFGQDFGDIFGDIFGGGGGGGRGRQRQQRGSDLRYNVELSLEDAVKGKSLEIKVPTYVSCEPCDGSGAKKGTSAKTCSTCHGHGQVQMRQGLFAVQQTCPTCSGKGKVIADKCTSCRGQGRVEKTKTLSVKIPAGVDTGDRIRLSGEGEAGEHGAPAGDLYVQVNVRDHDIFVRDENHLYCEVPISFVTASLGGEIEVPTLGGKVKLKVPKETQTGKMFRLRGKGVKSVRSTSTGDLMCKVVIETPVNLSGDQADLLRQLEEKMASSSKKHSPKETGFFDGVKKFFDDLKS</sequence>
<organism>
    <name type="scientific">Colwellia maris</name>
    <dbReference type="NCBI Taxonomy" id="77524"/>
    <lineage>
        <taxon>Bacteria</taxon>
        <taxon>Pseudomonadati</taxon>
        <taxon>Pseudomonadota</taxon>
        <taxon>Gammaproteobacteria</taxon>
        <taxon>Alteromonadales</taxon>
        <taxon>Colwelliaceae</taxon>
        <taxon>Colwellia</taxon>
    </lineage>
</organism>
<protein>
    <recommendedName>
        <fullName evidence="1">Chaperone protein DnaJ</fullName>
    </recommendedName>
</protein>
<dbReference type="EMBL" id="AB084455">
    <property type="protein sequence ID" value="BAB91324.2"/>
    <property type="molecule type" value="Genomic_DNA"/>
</dbReference>
<dbReference type="SMR" id="Q8L3D3"/>
<dbReference type="GO" id="GO:0005737">
    <property type="term" value="C:cytoplasm"/>
    <property type="evidence" value="ECO:0007669"/>
    <property type="project" value="UniProtKB-SubCell"/>
</dbReference>
<dbReference type="GO" id="GO:0005524">
    <property type="term" value="F:ATP binding"/>
    <property type="evidence" value="ECO:0007669"/>
    <property type="project" value="InterPro"/>
</dbReference>
<dbReference type="GO" id="GO:0031072">
    <property type="term" value="F:heat shock protein binding"/>
    <property type="evidence" value="ECO:0007669"/>
    <property type="project" value="InterPro"/>
</dbReference>
<dbReference type="GO" id="GO:0051082">
    <property type="term" value="F:unfolded protein binding"/>
    <property type="evidence" value="ECO:0007669"/>
    <property type="project" value="UniProtKB-UniRule"/>
</dbReference>
<dbReference type="GO" id="GO:0008270">
    <property type="term" value="F:zinc ion binding"/>
    <property type="evidence" value="ECO:0007669"/>
    <property type="project" value="UniProtKB-UniRule"/>
</dbReference>
<dbReference type="GO" id="GO:0051085">
    <property type="term" value="P:chaperone cofactor-dependent protein refolding"/>
    <property type="evidence" value="ECO:0007669"/>
    <property type="project" value="TreeGrafter"/>
</dbReference>
<dbReference type="GO" id="GO:0006260">
    <property type="term" value="P:DNA replication"/>
    <property type="evidence" value="ECO:0007669"/>
    <property type="project" value="UniProtKB-KW"/>
</dbReference>
<dbReference type="GO" id="GO:0042026">
    <property type="term" value="P:protein refolding"/>
    <property type="evidence" value="ECO:0007669"/>
    <property type="project" value="TreeGrafter"/>
</dbReference>
<dbReference type="GO" id="GO:0009408">
    <property type="term" value="P:response to heat"/>
    <property type="evidence" value="ECO:0007669"/>
    <property type="project" value="InterPro"/>
</dbReference>
<dbReference type="CDD" id="cd06257">
    <property type="entry name" value="DnaJ"/>
    <property type="match status" value="1"/>
</dbReference>
<dbReference type="CDD" id="cd10747">
    <property type="entry name" value="DnaJ_C"/>
    <property type="match status" value="1"/>
</dbReference>
<dbReference type="CDD" id="cd10719">
    <property type="entry name" value="DnaJ_zf"/>
    <property type="match status" value="1"/>
</dbReference>
<dbReference type="FunFam" id="1.10.287.110:FF:000034">
    <property type="entry name" value="Chaperone protein DnaJ"/>
    <property type="match status" value="1"/>
</dbReference>
<dbReference type="FunFam" id="2.10.230.10:FF:000002">
    <property type="entry name" value="Molecular chaperone DnaJ"/>
    <property type="match status" value="1"/>
</dbReference>
<dbReference type="FunFam" id="2.60.260.20:FF:000004">
    <property type="entry name" value="Molecular chaperone DnaJ"/>
    <property type="match status" value="1"/>
</dbReference>
<dbReference type="Gene3D" id="1.10.287.110">
    <property type="entry name" value="DnaJ domain"/>
    <property type="match status" value="1"/>
</dbReference>
<dbReference type="Gene3D" id="2.10.230.10">
    <property type="entry name" value="Heat shock protein DnaJ, cysteine-rich domain"/>
    <property type="match status" value="1"/>
</dbReference>
<dbReference type="Gene3D" id="2.60.260.20">
    <property type="entry name" value="Urease metallochaperone UreE, N-terminal domain"/>
    <property type="match status" value="2"/>
</dbReference>
<dbReference type="HAMAP" id="MF_01152">
    <property type="entry name" value="DnaJ"/>
    <property type="match status" value="1"/>
</dbReference>
<dbReference type="InterPro" id="IPR012724">
    <property type="entry name" value="DnaJ"/>
</dbReference>
<dbReference type="InterPro" id="IPR002939">
    <property type="entry name" value="DnaJ_C"/>
</dbReference>
<dbReference type="InterPro" id="IPR001623">
    <property type="entry name" value="DnaJ_domain"/>
</dbReference>
<dbReference type="InterPro" id="IPR018253">
    <property type="entry name" value="DnaJ_domain_CS"/>
</dbReference>
<dbReference type="InterPro" id="IPR008971">
    <property type="entry name" value="HSP40/DnaJ_pept-bd"/>
</dbReference>
<dbReference type="InterPro" id="IPR001305">
    <property type="entry name" value="HSP_DnaJ_Cys-rich_dom"/>
</dbReference>
<dbReference type="InterPro" id="IPR036410">
    <property type="entry name" value="HSP_DnaJ_Cys-rich_dom_sf"/>
</dbReference>
<dbReference type="InterPro" id="IPR036869">
    <property type="entry name" value="J_dom_sf"/>
</dbReference>
<dbReference type="NCBIfam" id="TIGR02349">
    <property type="entry name" value="DnaJ_bact"/>
    <property type="match status" value="1"/>
</dbReference>
<dbReference type="NCBIfam" id="NF008035">
    <property type="entry name" value="PRK10767.1"/>
    <property type="match status" value="1"/>
</dbReference>
<dbReference type="PANTHER" id="PTHR43096:SF48">
    <property type="entry name" value="CHAPERONE PROTEIN DNAJ"/>
    <property type="match status" value="1"/>
</dbReference>
<dbReference type="PANTHER" id="PTHR43096">
    <property type="entry name" value="DNAJ HOMOLOG 1, MITOCHONDRIAL-RELATED"/>
    <property type="match status" value="1"/>
</dbReference>
<dbReference type="Pfam" id="PF00226">
    <property type="entry name" value="DnaJ"/>
    <property type="match status" value="1"/>
</dbReference>
<dbReference type="Pfam" id="PF01556">
    <property type="entry name" value="DnaJ_C"/>
    <property type="match status" value="1"/>
</dbReference>
<dbReference type="Pfam" id="PF00684">
    <property type="entry name" value="DnaJ_CXXCXGXG"/>
    <property type="match status" value="1"/>
</dbReference>
<dbReference type="PRINTS" id="PR00625">
    <property type="entry name" value="JDOMAIN"/>
</dbReference>
<dbReference type="SMART" id="SM00271">
    <property type="entry name" value="DnaJ"/>
    <property type="match status" value="1"/>
</dbReference>
<dbReference type="SUPFAM" id="SSF46565">
    <property type="entry name" value="Chaperone J-domain"/>
    <property type="match status" value="1"/>
</dbReference>
<dbReference type="SUPFAM" id="SSF57938">
    <property type="entry name" value="DnaJ/Hsp40 cysteine-rich domain"/>
    <property type="match status" value="1"/>
</dbReference>
<dbReference type="SUPFAM" id="SSF49493">
    <property type="entry name" value="HSP40/DnaJ peptide-binding domain"/>
    <property type="match status" value="2"/>
</dbReference>
<dbReference type="PROSITE" id="PS00636">
    <property type="entry name" value="DNAJ_1"/>
    <property type="match status" value="1"/>
</dbReference>
<dbReference type="PROSITE" id="PS50076">
    <property type="entry name" value="DNAJ_2"/>
    <property type="match status" value="1"/>
</dbReference>
<dbReference type="PROSITE" id="PS51188">
    <property type="entry name" value="ZF_CR"/>
    <property type="match status" value="1"/>
</dbReference>
<gene>
    <name evidence="1" type="primary">dnaJ</name>
</gene>
<evidence type="ECO:0000255" key="1">
    <source>
        <dbReference type="HAMAP-Rule" id="MF_01152"/>
    </source>
</evidence>
<keyword id="KW-0143">Chaperone</keyword>
<keyword id="KW-0963">Cytoplasm</keyword>
<keyword id="KW-0235">DNA replication</keyword>
<keyword id="KW-0479">Metal-binding</keyword>
<keyword id="KW-0677">Repeat</keyword>
<keyword id="KW-0346">Stress response</keyword>
<keyword id="KW-0862">Zinc</keyword>
<keyword id="KW-0863">Zinc-finger</keyword>
<name>DNAJ_COLMA</name>